<gene>
    <name type="ordered locus">TV0745</name>
    <name type="ORF">TVG0750626</name>
</gene>
<proteinExistence type="evidence at protein level"/>
<reference key="1">
    <citation type="journal article" date="2000" name="Proc. Natl. Acad. Sci. U.S.A.">
        <title>Archaeal adaptation to higher temperatures revealed by genomic sequence of Thermoplasma volcanium.</title>
        <authorList>
            <person name="Kawashima T."/>
            <person name="Amano N."/>
            <person name="Koike H."/>
            <person name="Makino S."/>
            <person name="Higuchi S."/>
            <person name="Kawashima-Ohya Y."/>
            <person name="Watanabe K."/>
            <person name="Yamazaki M."/>
            <person name="Kanehori K."/>
            <person name="Kawamoto T."/>
            <person name="Nunoshiba T."/>
            <person name="Yamamoto Y."/>
            <person name="Aramaki H."/>
            <person name="Makino K."/>
            <person name="Suzuki M."/>
        </authorList>
    </citation>
    <scope>NUCLEOTIDE SEQUENCE [LARGE SCALE GENOMIC DNA]</scope>
    <source>
        <strain>ATCC 51530 / DSM 4299 / JCM 9571 / NBRC 15438 / GSS1</strain>
    </source>
</reference>
<keyword id="KW-0002">3D-structure</keyword>
<keyword id="KW-0963">Cytoplasm</keyword>
<keyword id="KW-0444">Lipid biosynthesis</keyword>
<keyword id="KW-0443">Lipid metabolism</keyword>
<keyword id="KW-0460">Magnesium</keyword>
<keyword id="KW-0479">Metal-binding</keyword>
<keyword id="KW-0594">Phospholipid biosynthesis</keyword>
<keyword id="KW-1208">Phospholipid metabolism</keyword>
<keyword id="KW-0808">Transferase</keyword>
<protein>
    <recommendedName>
        <fullName evidence="1">Geranylgeranylglyceryl phosphate synthase</fullName>
        <shortName evidence="1">GGGP synthase</shortName>
        <shortName evidence="1">GGGPS</shortName>
        <ecNumber evidence="1">2.5.1.41</ecNumber>
    </recommendedName>
    <alternativeName>
        <fullName evidence="1">(S)-3-O-geranylgeranylglyceryl phosphate synthase</fullName>
    </alternativeName>
    <alternativeName>
        <fullName evidence="1">Phosphoglycerol geranylgeranyltransferase</fullName>
    </alternativeName>
</protein>
<accession>Q97AR4</accession>
<sequence length="252" mass="27473">MTILKQMMRKLKNEKIHMTLIDPAAKSPDESAKIAKEAEMAGTDFIMVGGSTDIDERLMDQTVSAIKENTNLKVILFPGSSNMISRHADAIFFMSLLNSSDREFIVGHQVKASKFLSLLGIEKIPMAYLVFSPGMTVGRVGKANLIDSFDRETALSYSLAAQYMGFKLIYFEAGSGAPRPVSEDTISYVKSKINIPLIVGGGIRDPETAMRIALAGADMIVTGSIAEKSNNVYSVLRNIIGKIKSIEIKNSV</sequence>
<organism>
    <name type="scientific">Thermoplasma volcanium (strain ATCC 51530 / DSM 4299 / JCM 9571 / NBRC 15438 / GSS1)</name>
    <dbReference type="NCBI Taxonomy" id="273116"/>
    <lineage>
        <taxon>Archaea</taxon>
        <taxon>Methanobacteriati</taxon>
        <taxon>Thermoplasmatota</taxon>
        <taxon>Thermoplasmata</taxon>
        <taxon>Thermoplasmatales</taxon>
        <taxon>Thermoplasmataceae</taxon>
        <taxon>Thermoplasma</taxon>
    </lineage>
</organism>
<evidence type="ECO:0000255" key="1">
    <source>
        <dbReference type="HAMAP-Rule" id="MF_00112"/>
    </source>
</evidence>
<evidence type="ECO:0000305" key="2"/>
<evidence type="ECO:0007829" key="3">
    <source>
        <dbReference type="PDB" id="6NKE"/>
    </source>
</evidence>
<dbReference type="EC" id="2.5.1.41" evidence="1"/>
<dbReference type="EMBL" id="BA000011">
    <property type="protein sequence ID" value="BAB59887.1"/>
    <property type="status" value="ALT_INIT"/>
    <property type="molecule type" value="Genomic_DNA"/>
</dbReference>
<dbReference type="RefSeq" id="WP_010916992.1">
    <property type="nucleotide sequence ID" value="NC_002689.2"/>
</dbReference>
<dbReference type="PDB" id="6NKE">
    <property type="method" value="X-ray"/>
    <property type="resolution" value="1.72 A"/>
    <property type="chains" value="A=1-252"/>
</dbReference>
<dbReference type="PDBsum" id="6NKE"/>
<dbReference type="SMR" id="Q97AR4"/>
<dbReference type="STRING" id="273116.gene:9381535"/>
<dbReference type="PaxDb" id="273116-14324961"/>
<dbReference type="GeneID" id="1441840"/>
<dbReference type="KEGG" id="tvo:TVG0750626"/>
<dbReference type="eggNOG" id="arCOG01085">
    <property type="taxonomic scope" value="Archaea"/>
</dbReference>
<dbReference type="HOGENOM" id="CLU_068610_0_0_2"/>
<dbReference type="OrthoDB" id="7409at2157"/>
<dbReference type="PhylomeDB" id="Q97AR4"/>
<dbReference type="BRENDA" id="2.5.1.41">
    <property type="organism ID" value="6326"/>
</dbReference>
<dbReference type="UniPathway" id="UPA00940"/>
<dbReference type="Proteomes" id="UP000001017">
    <property type="component" value="Chromosome"/>
</dbReference>
<dbReference type="GO" id="GO:0005737">
    <property type="term" value="C:cytoplasm"/>
    <property type="evidence" value="ECO:0007669"/>
    <property type="project" value="UniProtKB-SubCell"/>
</dbReference>
<dbReference type="GO" id="GO:0000287">
    <property type="term" value="F:magnesium ion binding"/>
    <property type="evidence" value="ECO:0007669"/>
    <property type="project" value="UniProtKB-UniRule"/>
</dbReference>
<dbReference type="GO" id="GO:0047294">
    <property type="term" value="F:phosphoglycerol geranylgeranyltransferase activity"/>
    <property type="evidence" value="ECO:0007669"/>
    <property type="project" value="UniProtKB-UniRule"/>
</dbReference>
<dbReference type="GO" id="GO:0046474">
    <property type="term" value="P:glycerophospholipid biosynthetic process"/>
    <property type="evidence" value="ECO:0007669"/>
    <property type="project" value="UniProtKB-UniRule"/>
</dbReference>
<dbReference type="CDD" id="cd02812">
    <property type="entry name" value="PcrB_like"/>
    <property type="match status" value="1"/>
</dbReference>
<dbReference type="Gene3D" id="3.20.20.390">
    <property type="entry name" value="FMN-linked oxidoreductases"/>
    <property type="match status" value="1"/>
</dbReference>
<dbReference type="HAMAP" id="MF_00112">
    <property type="entry name" value="GGGP_HepGP_synthase"/>
    <property type="match status" value="1"/>
</dbReference>
<dbReference type="InterPro" id="IPR039074">
    <property type="entry name" value="GGGP/HepGP_synthase_I"/>
</dbReference>
<dbReference type="InterPro" id="IPR038597">
    <property type="entry name" value="GGGP/HepGP_synthase_sf"/>
</dbReference>
<dbReference type="InterPro" id="IPR008205">
    <property type="entry name" value="GGGP_HepGP_synthase"/>
</dbReference>
<dbReference type="InterPro" id="IPR010946">
    <property type="entry name" value="GGGP_synth"/>
</dbReference>
<dbReference type="NCBIfam" id="TIGR01769">
    <property type="entry name" value="GGGP"/>
    <property type="match status" value="1"/>
</dbReference>
<dbReference type="NCBIfam" id="TIGR01768">
    <property type="entry name" value="GGGP-family"/>
    <property type="match status" value="1"/>
</dbReference>
<dbReference type="NCBIfam" id="NF003198">
    <property type="entry name" value="PRK04169.1-2"/>
    <property type="match status" value="1"/>
</dbReference>
<dbReference type="PANTHER" id="PTHR40029">
    <property type="match status" value="1"/>
</dbReference>
<dbReference type="PANTHER" id="PTHR40029:SF2">
    <property type="entry name" value="HEPTAPRENYLGLYCERYL PHOSPHATE SYNTHASE"/>
    <property type="match status" value="1"/>
</dbReference>
<dbReference type="Pfam" id="PF01884">
    <property type="entry name" value="PcrB"/>
    <property type="match status" value="1"/>
</dbReference>
<dbReference type="SUPFAM" id="SSF51395">
    <property type="entry name" value="FMN-linked oxidoreductases"/>
    <property type="match status" value="1"/>
</dbReference>
<comment type="function">
    <text evidence="1">Prenyltransferase that catalyzes the transfer of the geranylgeranyl moiety of geranylgeranyl diphosphate (GGPP) to the C3 hydroxyl of sn-glycerol-1-phosphate (G1P). This reaction is the first ether-bond-formation step in the biosynthesis of archaeal membrane lipids.</text>
</comment>
<comment type="catalytic activity">
    <reaction evidence="1">
        <text>sn-glycerol 1-phosphate + (2E,6E,10E)-geranylgeranyl diphosphate = sn-3-O-(geranylgeranyl)glycerol 1-phosphate + diphosphate</text>
        <dbReference type="Rhea" id="RHEA:23404"/>
        <dbReference type="ChEBI" id="CHEBI:33019"/>
        <dbReference type="ChEBI" id="CHEBI:57677"/>
        <dbReference type="ChEBI" id="CHEBI:57685"/>
        <dbReference type="ChEBI" id="CHEBI:58756"/>
        <dbReference type="EC" id="2.5.1.41"/>
    </reaction>
</comment>
<comment type="cofactor">
    <cofactor evidence="1">
        <name>Mg(2+)</name>
        <dbReference type="ChEBI" id="CHEBI:18420"/>
    </cofactor>
</comment>
<comment type="pathway">
    <text evidence="1">Membrane lipid metabolism; glycerophospholipid metabolism.</text>
</comment>
<comment type="subcellular location">
    <subcellularLocation>
        <location evidence="1">Cytoplasm</location>
    </subcellularLocation>
</comment>
<comment type="similarity">
    <text evidence="1">Belongs to the GGGP/HepGP synthase family. Group II subfamily.</text>
</comment>
<comment type="sequence caution" evidence="2">
    <conflict type="erroneous initiation">
        <sequence resource="EMBL-CDS" id="BAB59887"/>
    </conflict>
</comment>
<name>GGGPS_THEVO</name>
<feature type="chain" id="PRO_0000138747" description="Geranylgeranylglyceryl phosphate synthase">
    <location>
        <begin position="1"/>
        <end position="252"/>
    </location>
</feature>
<feature type="binding site" evidence="1">
    <location>
        <position position="22"/>
    </location>
    <ligand>
        <name>Mg(2+)</name>
        <dbReference type="ChEBI" id="CHEBI:18420"/>
    </ligand>
</feature>
<feature type="binding site" evidence="1">
    <location>
        <position position="51"/>
    </location>
    <ligand>
        <name>Mg(2+)</name>
        <dbReference type="ChEBI" id="CHEBI:18420"/>
    </ligand>
</feature>
<feature type="binding site" evidence="1">
    <location>
        <begin position="170"/>
        <end position="176"/>
    </location>
    <ligand>
        <name>sn-glycerol 1-phosphate</name>
        <dbReference type="ChEBI" id="CHEBI:57685"/>
    </ligand>
</feature>
<feature type="binding site" evidence="1">
    <location>
        <begin position="201"/>
        <end position="202"/>
    </location>
    <ligand>
        <name>sn-glycerol 1-phosphate</name>
        <dbReference type="ChEBI" id="CHEBI:57685"/>
    </ligand>
</feature>
<feature type="binding site" evidence="1">
    <location>
        <begin position="223"/>
        <end position="224"/>
    </location>
    <ligand>
        <name>sn-glycerol 1-phosphate</name>
        <dbReference type="ChEBI" id="CHEBI:57685"/>
    </ligand>
</feature>
<feature type="helix" evidence="3">
    <location>
        <begin position="3"/>
        <end position="11"/>
    </location>
</feature>
<feature type="strand" evidence="3">
    <location>
        <begin position="16"/>
        <end position="21"/>
    </location>
</feature>
<feature type="turn" evidence="3">
    <location>
        <begin position="23"/>
        <end position="25"/>
    </location>
</feature>
<feature type="helix" evidence="3">
    <location>
        <begin position="28"/>
        <end position="41"/>
    </location>
</feature>
<feature type="strand" evidence="3">
    <location>
        <begin position="44"/>
        <end position="48"/>
    </location>
</feature>
<feature type="helix" evidence="3">
    <location>
        <begin position="56"/>
        <end position="69"/>
    </location>
</feature>
<feature type="strand" evidence="3">
    <location>
        <begin position="74"/>
        <end position="76"/>
    </location>
</feature>
<feature type="strand" evidence="3">
    <location>
        <begin position="88"/>
        <end position="96"/>
    </location>
</feature>
<feature type="strand" evidence="3">
    <location>
        <begin position="99"/>
        <end position="101"/>
    </location>
</feature>
<feature type="helix" evidence="3">
    <location>
        <begin position="102"/>
        <end position="105"/>
    </location>
</feature>
<feature type="helix" evidence="3">
    <location>
        <begin position="107"/>
        <end position="117"/>
    </location>
</feature>
<feature type="strand" evidence="3">
    <location>
        <begin position="122"/>
        <end position="131"/>
    </location>
</feature>
<feature type="helix" evidence="3">
    <location>
        <begin position="135"/>
        <end position="140"/>
    </location>
</feature>
<feature type="helix" evidence="3">
    <location>
        <begin position="151"/>
        <end position="164"/>
    </location>
</feature>
<feature type="strand" evidence="3">
    <location>
        <begin position="167"/>
        <end position="172"/>
    </location>
</feature>
<feature type="helix" evidence="3">
    <location>
        <begin position="183"/>
        <end position="190"/>
    </location>
</feature>
<feature type="strand" evidence="3">
    <location>
        <begin position="197"/>
        <end position="202"/>
    </location>
</feature>
<feature type="helix" evidence="3">
    <location>
        <begin position="206"/>
        <end position="215"/>
    </location>
</feature>
<feature type="strand" evidence="3">
    <location>
        <begin position="218"/>
        <end position="222"/>
    </location>
</feature>
<feature type="helix" evidence="3">
    <location>
        <begin position="229"/>
        <end position="231"/>
    </location>
</feature>
<feature type="helix" evidence="3">
    <location>
        <begin position="232"/>
        <end position="243"/>
    </location>
</feature>